<accession>A9M3X8</accession>
<name>RL11_NEIM0</name>
<keyword id="KW-0488">Methylation</keyword>
<keyword id="KW-0687">Ribonucleoprotein</keyword>
<keyword id="KW-0689">Ribosomal protein</keyword>
<keyword id="KW-0694">RNA-binding</keyword>
<keyword id="KW-0699">rRNA-binding</keyword>
<reference key="1">
    <citation type="journal article" date="2008" name="Genomics">
        <title>Characterization of ST-4821 complex, a unique Neisseria meningitidis clone.</title>
        <authorList>
            <person name="Peng J."/>
            <person name="Yang L."/>
            <person name="Yang F."/>
            <person name="Yang J."/>
            <person name="Yan Y."/>
            <person name="Nie H."/>
            <person name="Zhang X."/>
            <person name="Xiong Z."/>
            <person name="Jiang Y."/>
            <person name="Cheng F."/>
            <person name="Xu X."/>
            <person name="Chen S."/>
            <person name="Sun L."/>
            <person name="Li W."/>
            <person name="Shen Y."/>
            <person name="Shao Z."/>
            <person name="Liang X."/>
            <person name="Xu J."/>
            <person name="Jin Q."/>
        </authorList>
    </citation>
    <scope>NUCLEOTIDE SEQUENCE [LARGE SCALE GENOMIC DNA]</scope>
    <source>
        <strain>053442</strain>
    </source>
</reference>
<protein>
    <recommendedName>
        <fullName evidence="1">Large ribosomal subunit protein uL11</fullName>
    </recommendedName>
    <alternativeName>
        <fullName evidence="2">50S ribosomal protein L11</fullName>
    </alternativeName>
</protein>
<gene>
    <name evidence="1" type="primary">rplK</name>
    <name type="ordered locus">NMCC_2017</name>
</gene>
<proteinExistence type="inferred from homology"/>
<comment type="function">
    <text evidence="1">Forms part of the ribosomal stalk which helps the ribosome interact with GTP-bound translation factors.</text>
</comment>
<comment type="subunit">
    <text evidence="1">Part of the ribosomal stalk of the 50S ribosomal subunit. Interacts with L10 and the large rRNA to form the base of the stalk. L10 forms an elongated spine to which L12 dimers bind in a sequential fashion forming a multimeric L10(L12)X complex.</text>
</comment>
<comment type="PTM">
    <text evidence="1">One or more lysine residues are methylated.</text>
</comment>
<comment type="similarity">
    <text evidence="1">Belongs to the universal ribosomal protein uL11 family.</text>
</comment>
<organism>
    <name type="scientific">Neisseria meningitidis serogroup C (strain 053442)</name>
    <dbReference type="NCBI Taxonomy" id="374833"/>
    <lineage>
        <taxon>Bacteria</taxon>
        <taxon>Pseudomonadati</taxon>
        <taxon>Pseudomonadota</taxon>
        <taxon>Betaproteobacteria</taxon>
        <taxon>Neisseriales</taxon>
        <taxon>Neisseriaceae</taxon>
        <taxon>Neisseria</taxon>
    </lineage>
</organism>
<sequence length="144" mass="15030">MAKKIIGYIKLQIPAGKANPSPPVGPALGQRGLNIMEFCKAFNAATQSMEPGLPIPVVITAFADKSFTFVMKTPPASILLKKAAGLQKGSSNPLTNKVGKLTRAQLEEIAKTKEPDLTAADLDAAVRTIAGSARSMGLDVEGVV</sequence>
<dbReference type="EMBL" id="CP000381">
    <property type="protein sequence ID" value="ABX74140.1"/>
    <property type="molecule type" value="Genomic_DNA"/>
</dbReference>
<dbReference type="RefSeq" id="WP_002233410.1">
    <property type="nucleotide sequence ID" value="NC_010120.1"/>
</dbReference>
<dbReference type="SMR" id="A9M3X8"/>
<dbReference type="KEGG" id="nmn:NMCC_2017"/>
<dbReference type="HOGENOM" id="CLU_074237_2_0_4"/>
<dbReference type="Proteomes" id="UP000001177">
    <property type="component" value="Chromosome"/>
</dbReference>
<dbReference type="GO" id="GO:0022625">
    <property type="term" value="C:cytosolic large ribosomal subunit"/>
    <property type="evidence" value="ECO:0007669"/>
    <property type="project" value="TreeGrafter"/>
</dbReference>
<dbReference type="GO" id="GO:0070180">
    <property type="term" value="F:large ribosomal subunit rRNA binding"/>
    <property type="evidence" value="ECO:0007669"/>
    <property type="project" value="UniProtKB-UniRule"/>
</dbReference>
<dbReference type="GO" id="GO:0003735">
    <property type="term" value="F:structural constituent of ribosome"/>
    <property type="evidence" value="ECO:0007669"/>
    <property type="project" value="InterPro"/>
</dbReference>
<dbReference type="GO" id="GO:0006412">
    <property type="term" value="P:translation"/>
    <property type="evidence" value="ECO:0007669"/>
    <property type="project" value="UniProtKB-UniRule"/>
</dbReference>
<dbReference type="CDD" id="cd00349">
    <property type="entry name" value="Ribosomal_L11"/>
    <property type="match status" value="1"/>
</dbReference>
<dbReference type="FunFam" id="1.10.10.250:FF:000001">
    <property type="entry name" value="50S ribosomal protein L11"/>
    <property type="match status" value="1"/>
</dbReference>
<dbReference type="FunFam" id="3.30.1550.10:FF:000001">
    <property type="entry name" value="50S ribosomal protein L11"/>
    <property type="match status" value="1"/>
</dbReference>
<dbReference type="Gene3D" id="1.10.10.250">
    <property type="entry name" value="Ribosomal protein L11, C-terminal domain"/>
    <property type="match status" value="1"/>
</dbReference>
<dbReference type="Gene3D" id="3.30.1550.10">
    <property type="entry name" value="Ribosomal protein L11/L12, N-terminal domain"/>
    <property type="match status" value="1"/>
</dbReference>
<dbReference type="HAMAP" id="MF_00736">
    <property type="entry name" value="Ribosomal_uL11"/>
    <property type="match status" value="1"/>
</dbReference>
<dbReference type="InterPro" id="IPR000911">
    <property type="entry name" value="Ribosomal_uL11"/>
</dbReference>
<dbReference type="InterPro" id="IPR006519">
    <property type="entry name" value="Ribosomal_uL11_bac-typ"/>
</dbReference>
<dbReference type="InterPro" id="IPR020783">
    <property type="entry name" value="Ribosomal_uL11_C"/>
</dbReference>
<dbReference type="InterPro" id="IPR036769">
    <property type="entry name" value="Ribosomal_uL11_C_sf"/>
</dbReference>
<dbReference type="InterPro" id="IPR020785">
    <property type="entry name" value="Ribosomal_uL11_CS"/>
</dbReference>
<dbReference type="InterPro" id="IPR020784">
    <property type="entry name" value="Ribosomal_uL11_N"/>
</dbReference>
<dbReference type="InterPro" id="IPR036796">
    <property type="entry name" value="Ribosomal_uL11_N_sf"/>
</dbReference>
<dbReference type="NCBIfam" id="TIGR01632">
    <property type="entry name" value="L11_bact"/>
    <property type="match status" value="1"/>
</dbReference>
<dbReference type="PANTHER" id="PTHR11661">
    <property type="entry name" value="60S RIBOSOMAL PROTEIN L12"/>
    <property type="match status" value="1"/>
</dbReference>
<dbReference type="PANTHER" id="PTHR11661:SF1">
    <property type="entry name" value="LARGE RIBOSOMAL SUBUNIT PROTEIN UL11M"/>
    <property type="match status" value="1"/>
</dbReference>
<dbReference type="Pfam" id="PF00298">
    <property type="entry name" value="Ribosomal_L11"/>
    <property type="match status" value="1"/>
</dbReference>
<dbReference type="Pfam" id="PF03946">
    <property type="entry name" value="Ribosomal_L11_N"/>
    <property type="match status" value="1"/>
</dbReference>
<dbReference type="SMART" id="SM00649">
    <property type="entry name" value="RL11"/>
    <property type="match status" value="1"/>
</dbReference>
<dbReference type="SUPFAM" id="SSF54747">
    <property type="entry name" value="Ribosomal L11/L12e N-terminal domain"/>
    <property type="match status" value="1"/>
</dbReference>
<dbReference type="SUPFAM" id="SSF46906">
    <property type="entry name" value="Ribosomal protein L11, C-terminal domain"/>
    <property type="match status" value="1"/>
</dbReference>
<dbReference type="PROSITE" id="PS00359">
    <property type="entry name" value="RIBOSOMAL_L11"/>
    <property type="match status" value="1"/>
</dbReference>
<feature type="chain" id="PRO_1000083392" description="Large ribosomal subunit protein uL11">
    <location>
        <begin position="1"/>
        <end position="144"/>
    </location>
</feature>
<evidence type="ECO:0000255" key="1">
    <source>
        <dbReference type="HAMAP-Rule" id="MF_00736"/>
    </source>
</evidence>
<evidence type="ECO:0000305" key="2"/>